<organism>
    <name type="scientific">Actinobacillus pleuropneumoniae serotype 5b (strain L20)</name>
    <dbReference type="NCBI Taxonomy" id="416269"/>
    <lineage>
        <taxon>Bacteria</taxon>
        <taxon>Pseudomonadati</taxon>
        <taxon>Pseudomonadota</taxon>
        <taxon>Gammaproteobacteria</taxon>
        <taxon>Pasteurellales</taxon>
        <taxon>Pasteurellaceae</taxon>
        <taxon>Actinobacillus</taxon>
    </lineage>
</organism>
<accession>A3N2R1</accession>
<feature type="chain" id="PRO_1000145107" description="Urease accessory protein UreF">
    <location>
        <begin position="1"/>
        <end position="227"/>
    </location>
</feature>
<reference key="1">
    <citation type="journal article" date="2008" name="J. Bacteriol.">
        <title>The complete genome sequence of Actinobacillus pleuropneumoniae L20 (serotype 5b).</title>
        <authorList>
            <person name="Foote S.J."/>
            <person name="Bosse J.T."/>
            <person name="Bouevitch A.B."/>
            <person name="Langford P.R."/>
            <person name="Young N.M."/>
            <person name="Nash J.H.E."/>
        </authorList>
    </citation>
    <scope>NUCLEOTIDE SEQUENCE [LARGE SCALE GENOMIC DNA]</scope>
    <source>
        <strain>L20</strain>
    </source>
</reference>
<comment type="function">
    <text evidence="1">Required for maturation of urease via the functional incorporation of the urease nickel metallocenter.</text>
</comment>
<comment type="subunit">
    <text evidence="1">UreD, UreF and UreG form a complex that acts as a GTP-hydrolysis-dependent molecular chaperone, activating the urease apoprotein by helping to assemble the nickel containing metallocenter of UreC. The UreE protein probably delivers the nickel.</text>
</comment>
<comment type="subcellular location">
    <subcellularLocation>
        <location evidence="1">Cytoplasm</location>
    </subcellularLocation>
</comment>
<comment type="similarity">
    <text evidence="1">Belongs to the UreF family.</text>
</comment>
<sequence length="227" mass="25468">MGQLGALLHLVDPTLPIGGFNHSNGLETFVQQGKVNSRASLEEYVQTQLMQNWIYNDGAYLSLAFDAMANHDLDRLLQLDQELAASKIARESREGSYKLGVRLLKIFIRYENHPLLSEFQQAISEKRCQGYFPIVFAMVAQAMNLDKAETLYAFYYNAAVGVVTNGVKLVPLSQMDGQDILFALRTPLAQAVENSLNPDLDWLGAATLASDIRSMQHEQLYTRLYMS</sequence>
<protein>
    <recommendedName>
        <fullName evidence="1">Urease accessory protein UreF</fullName>
    </recommendedName>
</protein>
<proteinExistence type="inferred from homology"/>
<keyword id="KW-0143">Chaperone</keyword>
<keyword id="KW-0963">Cytoplasm</keyword>
<keyword id="KW-0996">Nickel insertion</keyword>
<keyword id="KW-1185">Reference proteome</keyword>
<evidence type="ECO:0000255" key="1">
    <source>
        <dbReference type="HAMAP-Rule" id="MF_01385"/>
    </source>
</evidence>
<gene>
    <name evidence="1" type="primary">ureF</name>
    <name type="ordered locus">APL_1613</name>
</gene>
<name>UREF_ACTP2</name>
<dbReference type="EMBL" id="CP000569">
    <property type="protein sequence ID" value="ABN74697.1"/>
    <property type="molecule type" value="Genomic_DNA"/>
</dbReference>
<dbReference type="RefSeq" id="WP_009874591.1">
    <property type="nucleotide sequence ID" value="NC_009053.1"/>
</dbReference>
<dbReference type="SMR" id="A3N2R1"/>
<dbReference type="STRING" id="416269.APL_1613"/>
<dbReference type="EnsemblBacteria" id="ABN74697">
    <property type="protein sequence ID" value="ABN74697"/>
    <property type="gene ID" value="APL_1613"/>
</dbReference>
<dbReference type="KEGG" id="apl:APL_1613"/>
<dbReference type="eggNOG" id="COG0830">
    <property type="taxonomic scope" value="Bacteria"/>
</dbReference>
<dbReference type="HOGENOM" id="CLU_049215_4_2_6"/>
<dbReference type="Proteomes" id="UP000001432">
    <property type="component" value="Chromosome"/>
</dbReference>
<dbReference type="GO" id="GO:0005737">
    <property type="term" value="C:cytoplasm"/>
    <property type="evidence" value="ECO:0007669"/>
    <property type="project" value="UniProtKB-SubCell"/>
</dbReference>
<dbReference type="GO" id="GO:0016151">
    <property type="term" value="F:nickel cation binding"/>
    <property type="evidence" value="ECO:0007669"/>
    <property type="project" value="UniProtKB-UniRule"/>
</dbReference>
<dbReference type="Gene3D" id="1.10.4190.10">
    <property type="entry name" value="Urease accessory protein UreF"/>
    <property type="match status" value="1"/>
</dbReference>
<dbReference type="HAMAP" id="MF_01385">
    <property type="entry name" value="UreF"/>
    <property type="match status" value="1"/>
</dbReference>
<dbReference type="InterPro" id="IPR002639">
    <property type="entry name" value="UreF"/>
</dbReference>
<dbReference type="InterPro" id="IPR038277">
    <property type="entry name" value="UreF_sf"/>
</dbReference>
<dbReference type="PANTHER" id="PTHR33620">
    <property type="entry name" value="UREASE ACCESSORY PROTEIN F"/>
    <property type="match status" value="1"/>
</dbReference>
<dbReference type="PANTHER" id="PTHR33620:SF1">
    <property type="entry name" value="UREASE ACCESSORY PROTEIN F"/>
    <property type="match status" value="1"/>
</dbReference>
<dbReference type="Pfam" id="PF01730">
    <property type="entry name" value="UreF"/>
    <property type="match status" value="1"/>
</dbReference>
<dbReference type="PIRSF" id="PIRSF009467">
    <property type="entry name" value="Ureas_acces_UreF"/>
    <property type="match status" value="1"/>
</dbReference>